<protein>
    <recommendedName>
        <fullName>Antagonist of mitotic exit network protein 1</fullName>
    </recommendedName>
</protein>
<evidence type="ECO:0000250" key="1"/>
<evidence type="ECO:0000250" key="2">
    <source>
        <dbReference type="UniProtKB" id="P38285"/>
    </source>
</evidence>
<evidence type="ECO:0000305" key="3"/>
<name>AMN1_EREGS</name>
<sequence length="392" mass="43239">MSAEKSKIEHAPWAWGLPVTPPRAAAACAASPWTPRVPADIAQAGGRAGTPRRRAPARTLGHVIFAVPELVEQLVRFVAAGSEQAGAPRALHHCLLVNRLWHAVTVAVLRERLYFADARRLRQFAAAAHRGRLAPELVVLHKLTRLEQRDLDRALQHVSPERLRRLELYVCPRVLPPAGYLGRAGGLRRLALPGNKLVSDDFLIEACVHLPRLQVLDLRACDRVSDAGVVAVATNCPRLHTVNLGRHRNGHLITSVAVVALARHVQLETLGVAGCDVSDAGLWELAAVCGPSLARLSLNNCRYLTNRSVPALLELNAFPNLSVLELRNIPHLTDVRAVVRYRQWKRACGLPVLVEGCDRLTQLFRCEERKLCKENCASPVRDLAAWLRSEED</sequence>
<gene>
    <name type="primary">AMN1</name>
    <name type="ordered locus">ADR061C</name>
</gene>
<keyword id="KW-0131">Cell cycle</keyword>
<keyword id="KW-0132">Cell division</keyword>
<keyword id="KW-0963">Cytoplasm</keyword>
<keyword id="KW-0498">Mitosis</keyword>
<keyword id="KW-0539">Nucleus</keyword>
<keyword id="KW-1185">Reference proteome</keyword>
<comment type="function">
    <text evidence="1">Negative regulator of the mitotic exit network (MEN), required for multiple cell cycle checkpoints. Required for daughter cell separation and chromosome stability. Involved in copper sensitivity.</text>
</comment>
<comment type="subcellular location">
    <subcellularLocation>
        <location evidence="2">Cytoplasm</location>
    </subcellularLocation>
    <subcellularLocation>
        <location evidence="2">Nucleus</location>
    </subcellularLocation>
</comment>
<comment type="similarity">
    <text evidence="3">Belongs to the AMN1 family.</text>
</comment>
<feature type="chain" id="PRO_0000277841" description="Antagonist of mitotic exit network protein 1">
    <location>
        <begin position="1"/>
        <end position="392"/>
    </location>
</feature>
<organism>
    <name type="scientific">Eremothecium gossypii (strain ATCC 10895 / CBS 109.51 / FGSC 9923 / NRRL Y-1056)</name>
    <name type="common">Yeast</name>
    <name type="synonym">Ashbya gossypii</name>
    <dbReference type="NCBI Taxonomy" id="284811"/>
    <lineage>
        <taxon>Eukaryota</taxon>
        <taxon>Fungi</taxon>
        <taxon>Dikarya</taxon>
        <taxon>Ascomycota</taxon>
        <taxon>Saccharomycotina</taxon>
        <taxon>Saccharomycetes</taxon>
        <taxon>Saccharomycetales</taxon>
        <taxon>Saccharomycetaceae</taxon>
        <taxon>Eremothecium</taxon>
    </lineage>
</organism>
<dbReference type="EMBL" id="AE016817">
    <property type="protein sequence ID" value="AAS51981.1"/>
    <property type="molecule type" value="Genomic_DNA"/>
</dbReference>
<dbReference type="RefSeq" id="NP_984157.1">
    <property type="nucleotide sequence ID" value="NM_209510.1"/>
</dbReference>
<dbReference type="SMR" id="Q75A58"/>
<dbReference type="FunCoup" id="Q75A58">
    <property type="interactions" value="125"/>
</dbReference>
<dbReference type="STRING" id="284811.Q75A58"/>
<dbReference type="EnsemblFungi" id="AAS51981">
    <property type="protein sequence ID" value="AAS51981"/>
    <property type="gene ID" value="AGOS_ADR061C"/>
</dbReference>
<dbReference type="GeneID" id="4620306"/>
<dbReference type="KEGG" id="ago:AGOS_ADR061C"/>
<dbReference type="eggNOG" id="KOG1947">
    <property type="taxonomic scope" value="Eukaryota"/>
</dbReference>
<dbReference type="HOGENOM" id="CLU_031725_0_0_1"/>
<dbReference type="InParanoid" id="Q75A58"/>
<dbReference type="OMA" id="IGLAGCH"/>
<dbReference type="OrthoDB" id="550575at2759"/>
<dbReference type="Proteomes" id="UP000000591">
    <property type="component" value="Chromosome IV"/>
</dbReference>
<dbReference type="GO" id="GO:0005737">
    <property type="term" value="C:cytoplasm"/>
    <property type="evidence" value="ECO:0000318"/>
    <property type="project" value="GO_Central"/>
</dbReference>
<dbReference type="GO" id="GO:0005634">
    <property type="term" value="C:nucleus"/>
    <property type="evidence" value="ECO:0007669"/>
    <property type="project" value="UniProtKB-SubCell"/>
</dbReference>
<dbReference type="GO" id="GO:0051301">
    <property type="term" value="P:cell division"/>
    <property type="evidence" value="ECO:0007669"/>
    <property type="project" value="UniProtKB-KW"/>
</dbReference>
<dbReference type="CDD" id="cd09293">
    <property type="entry name" value="AMN1"/>
    <property type="match status" value="1"/>
</dbReference>
<dbReference type="Gene3D" id="3.80.10.10">
    <property type="entry name" value="Ribonuclease Inhibitor"/>
    <property type="match status" value="2"/>
</dbReference>
<dbReference type="InterPro" id="IPR006553">
    <property type="entry name" value="Leu-rich_rpt_Cys-con_subtyp"/>
</dbReference>
<dbReference type="InterPro" id="IPR032675">
    <property type="entry name" value="LRR_dom_sf"/>
</dbReference>
<dbReference type="PANTHER" id="PTHR13318">
    <property type="entry name" value="PARTNER OF PAIRED, ISOFORM B-RELATED"/>
    <property type="match status" value="1"/>
</dbReference>
<dbReference type="SMART" id="SM00367">
    <property type="entry name" value="LRR_CC"/>
    <property type="match status" value="5"/>
</dbReference>
<dbReference type="SUPFAM" id="SSF52047">
    <property type="entry name" value="RNI-like"/>
    <property type="match status" value="1"/>
</dbReference>
<reference key="1">
    <citation type="journal article" date="2004" name="Science">
        <title>The Ashbya gossypii genome as a tool for mapping the ancient Saccharomyces cerevisiae genome.</title>
        <authorList>
            <person name="Dietrich F.S."/>
            <person name="Voegeli S."/>
            <person name="Brachat S."/>
            <person name="Lerch A."/>
            <person name="Gates K."/>
            <person name="Steiner S."/>
            <person name="Mohr C."/>
            <person name="Poehlmann R."/>
            <person name="Luedi P."/>
            <person name="Choi S."/>
            <person name="Wing R.A."/>
            <person name="Flavier A."/>
            <person name="Gaffney T.D."/>
            <person name="Philippsen P."/>
        </authorList>
    </citation>
    <scope>NUCLEOTIDE SEQUENCE [LARGE SCALE GENOMIC DNA]</scope>
    <source>
        <strain>ATCC 10895 / CBS 109.51 / FGSC 9923 / NRRL Y-1056</strain>
    </source>
</reference>
<reference key="2">
    <citation type="journal article" date="2013" name="G3 (Bethesda)">
        <title>Genomes of Ashbya fungi isolated from insects reveal four mating-type loci, numerous translocations, lack of transposons, and distinct gene duplications.</title>
        <authorList>
            <person name="Dietrich F.S."/>
            <person name="Voegeli S."/>
            <person name="Kuo S."/>
            <person name="Philippsen P."/>
        </authorList>
    </citation>
    <scope>GENOME REANNOTATION</scope>
    <source>
        <strain>ATCC 10895 / CBS 109.51 / FGSC 9923 / NRRL Y-1056</strain>
    </source>
</reference>
<proteinExistence type="inferred from homology"/>
<accession>Q75A58</accession>